<organism>
    <name type="scientific">Methanococcus maripaludis (strain C7 / ATCC BAA-1331)</name>
    <dbReference type="NCBI Taxonomy" id="426368"/>
    <lineage>
        <taxon>Archaea</taxon>
        <taxon>Methanobacteriati</taxon>
        <taxon>Methanobacteriota</taxon>
        <taxon>Methanomada group</taxon>
        <taxon>Methanococci</taxon>
        <taxon>Methanococcales</taxon>
        <taxon>Methanococcaceae</taxon>
        <taxon>Methanococcus</taxon>
    </lineage>
</organism>
<name>CDPAS_METM7</name>
<accession>A6VHW4</accession>
<dbReference type="EC" id="2.7.7.67" evidence="1"/>
<dbReference type="EMBL" id="CP000745">
    <property type="protein sequence ID" value="ABR66040.1"/>
    <property type="molecule type" value="Genomic_DNA"/>
</dbReference>
<dbReference type="SMR" id="A6VHW4"/>
<dbReference type="STRING" id="426368.MmarC7_0973"/>
<dbReference type="KEGG" id="mmz:MmarC7_0973"/>
<dbReference type="eggNOG" id="arCOG04106">
    <property type="taxonomic scope" value="Archaea"/>
</dbReference>
<dbReference type="HOGENOM" id="CLU_105710_0_0_2"/>
<dbReference type="OrthoDB" id="45383at2157"/>
<dbReference type="UniPathway" id="UPA00940"/>
<dbReference type="GO" id="GO:0005886">
    <property type="term" value="C:plasma membrane"/>
    <property type="evidence" value="ECO:0007669"/>
    <property type="project" value="UniProtKB-SubCell"/>
</dbReference>
<dbReference type="GO" id="GO:0043338">
    <property type="term" value="F:CDP-2,3-bis-(O-geranylgeranyl)-sn-glycerol synthase activity"/>
    <property type="evidence" value="ECO:0007669"/>
    <property type="project" value="UniProtKB-EC"/>
</dbReference>
<dbReference type="GO" id="GO:0046474">
    <property type="term" value="P:glycerophospholipid biosynthetic process"/>
    <property type="evidence" value="ECO:0007669"/>
    <property type="project" value="UniProtKB-UniRule"/>
</dbReference>
<dbReference type="HAMAP" id="MF_01117">
    <property type="entry name" value="CDP_archaeol_synth"/>
    <property type="match status" value="1"/>
</dbReference>
<dbReference type="InterPro" id="IPR032690">
    <property type="entry name" value="CarS"/>
</dbReference>
<dbReference type="InterPro" id="IPR002726">
    <property type="entry name" value="CarS_archaea"/>
</dbReference>
<dbReference type="NCBIfam" id="NF003114">
    <property type="entry name" value="PRK04032.1"/>
    <property type="match status" value="1"/>
</dbReference>
<dbReference type="PANTHER" id="PTHR39650">
    <property type="entry name" value="CDP-ARCHAEOL SYNTHASE"/>
    <property type="match status" value="1"/>
</dbReference>
<dbReference type="PANTHER" id="PTHR39650:SF1">
    <property type="entry name" value="CDP-ARCHAEOL SYNTHASE"/>
    <property type="match status" value="1"/>
</dbReference>
<dbReference type="Pfam" id="PF01864">
    <property type="entry name" value="CarS-like"/>
    <property type="match status" value="1"/>
</dbReference>
<feature type="chain" id="PRO_1000065246" description="CDP-archaeol synthase">
    <location>
        <begin position="1"/>
        <end position="178"/>
    </location>
</feature>
<feature type="transmembrane region" description="Helical" evidence="1">
    <location>
        <begin position="3"/>
        <end position="23"/>
    </location>
</feature>
<feature type="transmembrane region" description="Helical" evidence="1">
    <location>
        <begin position="56"/>
        <end position="76"/>
    </location>
</feature>
<feature type="transmembrane region" description="Helical" evidence="1">
    <location>
        <begin position="91"/>
        <end position="111"/>
    </location>
</feature>
<feature type="transmembrane region" description="Helical" evidence="1">
    <location>
        <begin position="123"/>
        <end position="143"/>
    </location>
</feature>
<feature type="transmembrane region" description="Helical" evidence="1">
    <location>
        <begin position="149"/>
        <end position="169"/>
    </location>
</feature>
<evidence type="ECO:0000255" key="1">
    <source>
        <dbReference type="HAMAP-Rule" id="MF_01117"/>
    </source>
</evidence>
<protein>
    <recommendedName>
        <fullName evidence="1">CDP-archaeol synthase</fullName>
        <ecNumber evidence="1">2.7.7.67</ecNumber>
    </recommendedName>
    <alternativeName>
        <fullName evidence="1">CDP-2,3-bis-(O-geranylgeranyl)-sn-glycerol synthase</fullName>
    </alternativeName>
</protein>
<reference key="1">
    <citation type="submission" date="2007-06" db="EMBL/GenBank/DDBJ databases">
        <title>Complete sequence of Methanococcus maripaludis C7.</title>
        <authorList>
            <consortium name="US DOE Joint Genome Institute"/>
            <person name="Copeland A."/>
            <person name="Lucas S."/>
            <person name="Lapidus A."/>
            <person name="Barry K."/>
            <person name="Glavina del Rio T."/>
            <person name="Dalin E."/>
            <person name="Tice H."/>
            <person name="Pitluck S."/>
            <person name="Clum A."/>
            <person name="Schmutz J."/>
            <person name="Larimer F."/>
            <person name="Land M."/>
            <person name="Hauser L."/>
            <person name="Kyrpides N."/>
            <person name="Anderson I."/>
            <person name="Sieprawska-Lupa M."/>
            <person name="Whitman W.B."/>
            <person name="Richardson P."/>
        </authorList>
    </citation>
    <scope>NUCLEOTIDE SEQUENCE [LARGE SCALE GENOMIC DNA]</scope>
    <source>
        <strain>C7 / ATCC BAA-1331</strain>
    </source>
</reference>
<keyword id="KW-1003">Cell membrane</keyword>
<keyword id="KW-0444">Lipid biosynthesis</keyword>
<keyword id="KW-0443">Lipid metabolism</keyword>
<keyword id="KW-0460">Magnesium</keyword>
<keyword id="KW-0472">Membrane</keyword>
<keyword id="KW-0594">Phospholipid biosynthesis</keyword>
<keyword id="KW-1208">Phospholipid metabolism</keyword>
<keyword id="KW-0808">Transferase</keyword>
<keyword id="KW-0812">Transmembrane</keyword>
<keyword id="KW-1133">Transmembrane helix</keyword>
<gene>
    <name evidence="1" type="primary">carS</name>
    <name type="ordered locus">MmarC7_0973</name>
</gene>
<comment type="function">
    <text evidence="1">Catalyzes the formation of CDP-2,3-bis-(O-geranylgeranyl)-sn-glycerol (CDP-archaeol) from 2,3-bis-(O-geranylgeranyl)-sn-glycerol 1-phosphate (DGGGP) and CTP. This reaction is the third ether-bond-formation step in the biosynthesis of archaeal membrane lipids.</text>
</comment>
<comment type="catalytic activity">
    <reaction evidence="1">
        <text>2,3-bis-O-(geranylgeranyl)-sn-glycerol 1-phosphate + CTP + H(+) = CDP-2,3-bis-O-(geranylgeranyl)-sn-glycerol + diphosphate</text>
        <dbReference type="Rhea" id="RHEA:25690"/>
        <dbReference type="ChEBI" id="CHEBI:15378"/>
        <dbReference type="ChEBI" id="CHEBI:33019"/>
        <dbReference type="ChEBI" id="CHEBI:37563"/>
        <dbReference type="ChEBI" id="CHEBI:58837"/>
        <dbReference type="ChEBI" id="CHEBI:58838"/>
        <dbReference type="EC" id="2.7.7.67"/>
    </reaction>
</comment>
<comment type="cofactor">
    <cofactor evidence="1">
        <name>Mg(2+)</name>
        <dbReference type="ChEBI" id="CHEBI:18420"/>
    </cofactor>
</comment>
<comment type="pathway">
    <text evidence="1">Membrane lipid metabolism; glycerophospholipid metabolism.</text>
</comment>
<comment type="subcellular location">
    <subcellularLocation>
        <location evidence="1">Cell membrane</location>
        <topology evidence="1">Multi-pass membrane protein</topology>
    </subcellularLocation>
</comment>
<comment type="similarity">
    <text evidence="1">Belongs to the CDP-archaeol synthase family.</text>
</comment>
<sequence>MDLLLLLFSAIWYILPAYVANAVPCILGGGRPVDLGKNFFDGNRIIGNGVTYRGTFFGILFGIITGILQHFIVILYMDPQSVFNYGLTGYIILGFLLGTGALFGDMLGSFIKRRLKLNQGQSAPLLDQMTFIVFALIFAYPLYQQPVNLMVILLVISPIIHFSSNIIAYKLHLKKVWW</sequence>
<proteinExistence type="inferred from homology"/>